<evidence type="ECO:0000250" key="1"/>
<evidence type="ECO:0000250" key="2">
    <source>
        <dbReference type="UniProtKB" id="Q9BSI4"/>
    </source>
</evidence>
<evidence type="ECO:0000255" key="3"/>
<evidence type="ECO:0000256" key="4">
    <source>
        <dbReference type="SAM" id="MobiDB-lite"/>
    </source>
</evidence>
<evidence type="ECO:0000269" key="5">
    <source>
    </source>
</evidence>
<evidence type="ECO:0000305" key="6"/>
<reference key="1">
    <citation type="submission" date="1999-12" db="EMBL/GenBank/DDBJ databases">
        <title>TIN2 regulates telomere length in mouse cells.</title>
        <authorList>
            <person name="Cheong C."/>
            <person name="Lee H.-W."/>
        </authorList>
    </citation>
    <scope>NUCLEOTIDE SEQUENCE [MRNA]</scope>
    <source>
        <tissue>Ovary</tissue>
        <tissue>Uterus</tissue>
    </source>
</reference>
<reference key="2">
    <citation type="journal article" date="2009" name="PLoS Biol.">
        <title>Lineage-specific biology revealed by a finished genome assembly of the mouse.</title>
        <authorList>
            <person name="Church D.M."/>
            <person name="Goodstadt L."/>
            <person name="Hillier L.W."/>
            <person name="Zody M.C."/>
            <person name="Goldstein S."/>
            <person name="She X."/>
            <person name="Bult C.J."/>
            <person name="Agarwala R."/>
            <person name="Cherry J.L."/>
            <person name="DiCuccio M."/>
            <person name="Hlavina W."/>
            <person name="Kapustin Y."/>
            <person name="Meric P."/>
            <person name="Maglott D."/>
            <person name="Birtle Z."/>
            <person name="Marques A.C."/>
            <person name="Graves T."/>
            <person name="Zhou S."/>
            <person name="Teague B."/>
            <person name="Potamousis K."/>
            <person name="Churas C."/>
            <person name="Place M."/>
            <person name="Herschleb J."/>
            <person name="Runnheim R."/>
            <person name="Forrest D."/>
            <person name="Amos-Landgraf J."/>
            <person name="Schwartz D.C."/>
            <person name="Cheng Z."/>
            <person name="Lindblad-Toh K."/>
            <person name="Eichler E.E."/>
            <person name="Ponting C.P."/>
        </authorList>
    </citation>
    <scope>NUCLEOTIDE SEQUENCE [LARGE SCALE GENOMIC DNA]</scope>
    <source>
        <strain>C57BL/6J</strain>
    </source>
</reference>
<reference key="3">
    <citation type="journal article" date="2009" name="J. Cell Biol.">
        <title>GNL3L stabilizes the TRF1 complex and promotes mitotic transition.</title>
        <authorList>
            <person name="Zhu Q."/>
            <person name="Meng L."/>
            <person name="Hsu J.K."/>
            <person name="Lin T."/>
            <person name="Teishima J."/>
            <person name="Tsai R.Y."/>
        </authorList>
    </citation>
    <scope>INTERACTION WITH TERF1</scope>
</reference>
<feature type="initiator methionine" description="Removed" evidence="2">
    <location>
        <position position="1"/>
    </location>
</feature>
<feature type="chain" id="PRO_0000072542" description="TERF1-interacting nuclear factor 2">
    <location>
        <begin position="2"/>
        <end position="341"/>
    </location>
</feature>
<feature type="region of interest" description="Disordered" evidence="4">
    <location>
        <begin position="283"/>
        <end position="341"/>
    </location>
</feature>
<feature type="short sequence motif" description="TBM">
    <location>
        <begin position="243"/>
        <end position="265"/>
    </location>
</feature>
<feature type="short sequence motif" description="Nuclear localization signal" evidence="3">
    <location>
        <begin position="249"/>
        <end position="255"/>
    </location>
</feature>
<feature type="modified residue" description="N-acetylalanine" evidence="2">
    <location>
        <position position="2"/>
    </location>
</feature>
<feature type="sequence conflict" description="In Ref. 1; AAF23504." evidence="6" ref="1">
    <original>S</original>
    <variation>G</variation>
    <location>
        <position position="337"/>
    </location>
</feature>
<comment type="function">
    <text evidence="1">Component of the shelterin complex (telosome) that is involved in the regulation of telomere length and protection. Shelterin associates with arrays of double-stranded TTAGGG repeats added by telomerase and protects chromosome ends; without its protective activity, telomeres are no longer hidden from the DNA damage surveillance and chromosome ends are inappropriately processed by DNA repair pathways. Plays a role in shelterin complex assembly (By similarity).</text>
</comment>
<comment type="subunit">
    <text evidence="1 5">Monomer. Found in a complex with POT1; TERF1 and TNKS1. Component of the shelterin complex (telosome) composed of TERF1, TERF2, TINF2, TERF2IP, ACD and POT1 (By similarity). Interacts with TERF1.</text>
</comment>
<comment type="subcellular location">
    <subcellularLocation>
        <location evidence="1">Nucleus</location>
    </subcellularLocation>
    <subcellularLocation>
        <location evidence="1">Chromosome</location>
        <location evidence="1">Telomere</location>
    </subcellularLocation>
</comment>
<comment type="domain">
    <text evidence="1">The TBM domain mediates interaction with TERF1.</text>
</comment>
<sequence>MAPPPGVGPASLRFAAAASWLVVRRRRVEHFPKVVEFLQSLRAAAPGLVCYRHHERLCMSLKAKVVVELILQARPWDQVLNALKHHFPAESRTTKEDRKLLEARENFCLLVKHLSEDPPSSLQELEQDYGESFLVAMEKLLFEYLCQLEKALPPVRAQELQDALSWSQPGSFITSSVALHQYGMDMGWTFPESSTSGSGNLIEPMEESPHQQTRPAFHSPLPKAKLGPHQPASLEHPEHLAGHRFNLAPLGKRKSRSHWTSAKACHKERPTVMLLPFRNMGLPAQDLSNPKSREEPGAASAASVGTEPVCTEEAKTPSRPLGKRALEETPPDSPAASRRTV</sequence>
<gene>
    <name type="primary">Tinf2</name>
    <name type="synonym">Tin2</name>
</gene>
<protein>
    <recommendedName>
        <fullName>TERF1-interacting nuclear factor 2</fullName>
    </recommendedName>
    <alternativeName>
        <fullName>TRF1-interacting nuclear protein 2</fullName>
    </alternativeName>
</protein>
<organism>
    <name type="scientific">Mus musculus</name>
    <name type="common">Mouse</name>
    <dbReference type="NCBI Taxonomy" id="10090"/>
    <lineage>
        <taxon>Eukaryota</taxon>
        <taxon>Metazoa</taxon>
        <taxon>Chordata</taxon>
        <taxon>Craniata</taxon>
        <taxon>Vertebrata</taxon>
        <taxon>Euteleostomi</taxon>
        <taxon>Mammalia</taxon>
        <taxon>Eutheria</taxon>
        <taxon>Euarchontoglires</taxon>
        <taxon>Glires</taxon>
        <taxon>Rodentia</taxon>
        <taxon>Myomorpha</taxon>
        <taxon>Muroidea</taxon>
        <taxon>Muridae</taxon>
        <taxon>Murinae</taxon>
        <taxon>Mus</taxon>
        <taxon>Mus</taxon>
    </lineage>
</organism>
<name>TINF2_MOUSE</name>
<accession>Q9QXG9</accession>
<accession>E9Q126</accession>
<keyword id="KW-0007">Acetylation</keyword>
<keyword id="KW-0158">Chromosome</keyword>
<keyword id="KW-0539">Nucleus</keyword>
<keyword id="KW-1185">Reference proteome</keyword>
<keyword id="KW-0779">Telomere</keyword>
<proteinExistence type="evidence at protein level"/>
<dbReference type="EMBL" id="AF214013">
    <property type="protein sequence ID" value="AAF23504.1"/>
    <property type="molecule type" value="mRNA"/>
</dbReference>
<dbReference type="EMBL" id="CT025679">
    <property type="status" value="NOT_ANNOTATED_CDS"/>
    <property type="molecule type" value="Genomic_DNA"/>
</dbReference>
<dbReference type="SMR" id="Q9QXG9"/>
<dbReference type="ComplexPortal" id="CPX-153">
    <property type="entry name" value="Shelterin complex"/>
</dbReference>
<dbReference type="FunCoup" id="Q9QXG9">
    <property type="interactions" value="1539"/>
</dbReference>
<dbReference type="IntAct" id="Q9QXG9">
    <property type="interactions" value="2"/>
</dbReference>
<dbReference type="MINT" id="Q9QXG9"/>
<dbReference type="STRING" id="10090.ENSMUSP00000007733"/>
<dbReference type="iPTMnet" id="Q9QXG9"/>
<dbReference type="PhosphoSitePlus" id="Q9QXG9"/>
<dbReference type="PaxDb" id="10090-ENSMUSP00000007733"/>
<dbReference type="PeptideAtlas" id="Q9QXG9"/>
<dbReference type="ProteomicsDB" id="259104"/>
<dbReference type="AGR" id="MGI:107246"/>
<dbReference type="MGI" id="MGI:107246">
    <property type="gene designation" value="Tinf2"/>
</dbReference>
<dbReference type="eggNOG" id="ENOG502S5UZ">
    <property type="taxonomic scope" value="Eukaryota"/>
</dbReference>
<dbReference type="InParanoid" id="Q9QXG9"/>
<dbReference type="Reactome" id="R-MMU-110330">
    <property type="pathway name" value="Recognition and association of DNA glycosylase with site containing an affected purine"/>
</dbReference>
<dbReference type="Reactome" id="R-MMU-110331">
    <property type="pathway name" value="Cleavage of the damaged purine"/>
</dbReference>
<dbReference type="Reactome" id="R-MMU-171319">
    <property type="pathway name" value="Telomere Extension By Telomerase"/>
</dbReference>
<dbReference type="Reactome" id="R-MMU-174411">
    <property type="pathway name" value="Polymerase switching on the C-strand of the telomere"/>
</dbReference>
<dbReference type="Reactome" id="R-MMU-174414">
    <property type="pathway name" value="Processive synthesis on the C-strand of the telomere"/>
</dbReference>
<dbReference type="Reactome" id="R-MMU-174417">
    <property type="pathway name" value="Telomere C-strand (Lagging Strand) Synthesis"/>
</dbReference>
<dbReference type="Reactome" id="R-MMU-174430">
    <property type="pathway name" value="Telomere C-strand synthesis initiation"/>
</dbReference>
<dbReference type="Reactome" id="R-MMU-174437">
    <property type="pathway name" value="Removal of the Flap Intermediate from the C-strand"/>
</dbReference>
<dbReference type="Reactome" id="R-MMU-2559586">
    <property type="pathway name" value="DNA Damage/Telomere Stress Induced Senescence"/>
</dbReference>
<dbReference type="Reactome" id="R-MMU-9670095">
    <property type="pathway name" value="Inhibition of DNA recombination at telomere"/>
</dbReference>
<dbReference type="ChiTaRS" id="Tinf2">
    <property type="organism name" value="mouse"/>
</dbReference>
<dbReference type="PRO" id="PR:Q9QXG9"/>
<dbReference type="Proteomes" id="UP000000589">
    <property type="component" value="Unplaced"/>
</dbReference>
<dbReference type="RNAct" id="Q9QXG9">
    <property type="molecule type" value="protein"/>
</dbReference>
<dbReference type="GO" id="GO:0000781">
    <property type="term" value="C:chromosome, telomeric region"/>
    <property type="evidence" value="ECO:0000314"/>
    <property type="project" value="BHF-UCL"/>
</dbReference>
<dbReference type="GO" id="GO:0005654">
    <property type="term" value="C:nucleoplasm"/>
    <property type="evidence" value="ECO:0000304"/>
    <property type="project" value="Reactome"/>
</dbReference>
<dbReference type="GO" id="GO:0070187">
    <property type="term" value="C:shelterin complex"/>
    <property type="evidence" value="ECO:0000266"/>
    <property type="project" value="ComplexPortal"/>
</dbReference>
<dbReference type="GO" id="GO:0042162">
    <property type="term" value="F:telomeric DNA binding"/>
    <property type="evidence" value="ECO:0000314"/>
    <property type="project" value="BHF-UCL"/>
</dbReference>
<dbReference type="GO" id="GO:0032205">
    <property type="term" value="P:negative regulation of telomere maintenance"/>
    <property type="evidence" value="ECO:0000314"/>
    <property type="project" value="MGI"/>
</dbReference>
<dbReference type="GO" id="GO:0032206">
    <property type="term" value="P:positive regulation of telomere maintenance"/>
    <property type="evidence" value="ECO:0000303"/>
    <property type="project" value="ComplexPortal"/>
</dbReference>
<dbReference type="GO" id="GO:0016233">
    <property type="term" value="P:telomere capping"/>
    <property type="evidence" value="ECO:0000266"/>
    <property type="project" value="ComplexPortal"/>
</dbReference>
<dbReference type="CDD" id="cd11657">
    <property type="entry name" value="TIN2_N"/>
    <property type="match status" value="1"/>
</dbReference>
<dbReference type="CDD" id="cd11741">
    <property type="entry name" value="TIN2_TBM"/>
    <property type="match status" value="1"/>
</dbReference>
<dbReference type="InterPro" id="IPR039098">
    <property type="entry name" value="TINF2"/>
</dbReference>
<dbReference type="InterPro" id="IPR029400">
    <property type="entry name" value="TINF2_N"/>
</dbReference>
<dbReference type="PANTHER" id="PTHR15512">
    <property type="entry name" value="TERF1-INTERACTING NUCLEAR FACTOR 2"/>
    <property type="match status" value="1"/>
</dbReference>
<dbReference type="PANTHER" id="PTHR15512:SF0">
    <property type="entry name" value="TERF1-INTERACTING NUCLEAR FACTOR 2"/>
    <property type="match status" value="1"/>
</dbReference>
<dbReference type="Pfam" id="PF14973">
    <property type="entry name" value="TINF2_N"/>
    <property type="match status" value="1"/>
</dbReference>